<dbReference type="EC" id="1.8.4.8" evidence="1"/>
<dbReference type="EMBL" id="CU928145">
    <property type="protein sequence ID" value="CAU98918.1"/>
    <property type="molecule type" value="Genomic_DNA"/>
</dbReference>
<dbReference type="RefSeq" id="WP_000039843.1">
    <property type="nucleotide sequence ID" value="NC_011748.1"/>
</dbReference>
<dbReference type="SMR" id="B7LEI1"/>
<dbReference type="GeneID" id="75205594"/>
<dbReference type="KEGG" id="eck:EC55989_3036"/>
<dbReference type="HOGENOM" id="CLU_044089_3_0_6"/>
<dbReference type="UniPathway" id="UPA00140">
    <property type="reaction ID" value="UER00206"/>
</dbReference>
<dbReference type="Proteomes" id="UP000000746">
    <property type="component" value="Chromosome"/>
</dbReference>
<dbReference type="GO" id="GO:0005737">
    <property type="term" value="C:cytoplasm"/>
    <property type="evidence" value="ECO:0007669"/>
    <property type="project" value="UniProtKB-SubCell"/>
</dbReference>
<dbReference type="GO" id="GO:0004604">
    <property type="term" value="F:phosphoadenylyl-sulfate reductase (thioredoxin) activity"/>
    <property type="evidence" value="ECO:0007669"/>
    <property type="project" value="UniProtKB-UniRule"/>
</dbReference>
<dbReference type="GO" id="GO:0070814">
    <property type="term" value="P:hydrogen sulfide biosynthetic process"/>
    <property type="evidence" value="ECO:0007669"/>
    <property type="project" value="UniProtKB-UniRule"/>
</dbReference>
<dbReference type="GO" id="GO:0019379">
    <property type="term" value="P:sulfate assimilation, phosphoadenylyl sulfate reduction by phosphoadenylyl-sulfate reductase (thioredoxin)"/>
    <property type="evidence" value="ECO:0007669"/>
    <property type="project" value="UniProtKB-UniRule"/>
</dbReference>
<dbReference type="CDD" id="cd23945">
    <property type="entry name" value="PAPS_reductase"/>
    <property type="match status" value="1"/>
</dbReference>
<dbReference type="FunFam" id="3.40.50.620:FF:000043">
    <property type="entry name" value="Phosphoadenosine phosphosulfate reductase"/>
    <property type="match status" value="1"/>
</dbReference>
<dbReference type="Gene3D" id="3.40.50.620">
    <property type="entry name" value="HUPs"/>
    <property type="match status" value="1"/>
</dbReference>
<dbReference type="HAMAP" id="MF_00063">
    <property type="entry name" value="CysH"/>
    <property type="match status" value="1"/>
</dbReference>
<dbReference type="InterPro" id="IPR004511">
    <property type="entry name" value="PAPS/APS_Rdtase"/>
</dbReference>
<dbReference type="InterPro" id="IPR002500">
    <property type="entry name" value="PAPS_reduct_dom"/>
</dbReference>
<dbReference type="InterPro" id="IPR011800">
    <property type="entry name" value="PAPS_reductase_CysH"/>
</dbReference>
<dbReference type="InterPro" id="IPR014729">
    <property type="entry name" value="Rossmann-like_a/b/a_fold"/>
</dbReference>
<dbReference type="NCBIfam" id="TIGR00434">
    <property type="entry name" value="cysH"/>
    <property type="match status" value="1"/>
</dbReference>
<dbReference type="NCBIfam" id="TIGR02057">
    <property type="entry name" value="PAPS_reductase"/>
    <property type="match status" value="1"/>
</dbReference>
<dbReference type="NCBIfam" id="NF002537">
    <property type="entry name" value="PRK02090.1"/>
    <property type="match status" value="1"/>
</dbReference>
<dbReference type="PANTHER" id="PTHR46509">
    <property type="entry name" value="PHOSPHOADENOSINE PHOSPHOSULFATE REDUCTASE"/>
    <property type="match status" value="1"/>
</dbReference>
<dbReference type="PANTHER" id="PTHR46509:SF1">
    <property type="entry name" value="PHOSPHOADENOSINE PHOSPHOSULFATE REDUCTASE"/>
    <property type="match status" value="1"/>
</dbReference>
<dbReference type="Pfam" id="PF01507">
    <property type="entry name" value="PAPS_reduct"/>
    <property type="match status" value="1"/>
</dbReference>
<dbReference type="PIRSF" id="PIRSF000857">
    <property type="entry name" value="PAPS_reductase"/>
    <property type="match status" value="1"/>
</dbReference>
<dbReference type="SUPFAM" id="SSF52402">
    <property type="entry name" value="Adenine nucleotide alpha hydrolases-like"/>
    <property type="match status" value="1"/>
</dbReference>
<name>CYSH_ECO55</name>
<comment type="function">
    <text evidence="1">Catalyzes the formation of sulfite from phosphoadenosine 5'-phosphosulfate (PAPS) using thioredoxin as an electron donor.</text>
</comment>
<comment type="catalytic activity">
    <reaction evidence="1">
        <text>[thioredoxin]-disulfide + sulfite + adenosine 3',5'-bisphosphate + 2 H(+) = [thioredoxin]-dithiol + 3'-phosphoadenylyl sulfate</text>
        <dbReference type="Rhea" id="RHEA:11724"/>
        <dbReference type="Rhea" id="RHEA-COMP:10698"/>
        <dbReference type="Rhea" id="RHEA-COMP:10700"/>
        <dbReference type="ChEBI" id="CHEBI:15378"/>
        <dbReference type="ChEBI" id="CHEBI:17359"/>
        <dbReference type="ChEBI" id="CHEBI:29950"/>
        <dbReference type="ChEBI" id="CHEBI:50058"/>
        <dbReference type="ChEBI" id="CHEBI:58339"/>
        <dbReference type="ChEBI" id="CHEBI:58343"/>
        <dbReference type="EC" id="1.8.4.8"/>
    </reaction>
</comment>
<comment type="pathway">
    <text evidence="1">Sulfur metabolism; hydrogen sulfide biosynthesis; sulfite from sulfate: step 3/3.</text>
</comment>
<comment type="subcellular location">
    <subcellularLocation>
        <location evidence="1">Cytoplasm</location>
    </subcellularLocation>
</comment>
<comment type="similarity">
    <text evidence="1">Belongs to the PAPS reductase family. CysH subfamily.</text>
</comment>
<accession>B7LEI1</accession>
<feature type="chain" id="PRO_1000117928" description="Phosphoadenosine 5'-phosphosulfate reductase">
    <location>
        <begin position="1"/>
        <end position="244"/>
    </location>
</feature>
<feature type="active site" description="Nucleophile; cysteine thiosulfonate intermediate" evidence="1">
    <location>
        <position position="239"/>
    </location>
</feature>
<gene>
    <name evidence="1" type="primary">cysH</name>
    <name type="ordered locus">EC55989_3036</name>
</gene>
<protein>
    <recommendedName>
        <fullName evidence="1">Phosphoadenosine 5'-phosphosulfate reductase</fullName>
        <shortName evidence="1">PAPS reductase</shortName>
        <ecNumber evidence="1">1.8.4.8</ecNumber>
    </recommendedName>
    <alternativeName>
        <fullName evidence="1">3'-phosphoadenylylsulfate reductase</fullName>
    </alternativeName>
    <alternativeName>
        <fullName evidence="1">PAPS reductase, thioredoxin dependent</fullName>
    </alternativeName>
    <alternativeName>
        <fullName evidence="1">PAPS sulfotransferase</fullName>
    </alternativeName>
    <alternativeName>
        <fullName evidence="1">PAdoPS reductase</fullName>
    </alternativeName>
</protein>
<reference key="1">
    <citation type="journal article" date="2009" name="PLoS Genet.">
        <title>Organised genome dynamics in the Escherichia coli species results in highly diverse adaptive paths.</title>
        <authorList>
            <person name="Touchon M."/>
            <person name="Hoede C."/>
            <person name="Tenaillon O."/>
            <person name="Barbe V."/>
            <person name="Baeriswyl S."/>
            <person name="Bidet P."/>
            <person name="Bingen E."/>
            <person name="Bonacorsi S."/>
            <person name="Bouchier C."/>
            <person name="Bouvet O."/>
            <person name="Calteau A."/>
            <person name="Chiapello H."/>
            <person name="Clermont O."/>
            <person name="Cruveiller S."/>
            <person name="Danchin A."/>
            <person name="Diard M."/>
            <person name="Dossat C."/>
            <person name="Karoui M.E."/>
            <person name="Frapy E."/>
            <person name="Garry L."/>
            <person name="Ghigo J.M."/>
            <person name="Gilles A.M."/>
            <person name="Johnson J."/>
            <person name="Le Bouguenec C."/>
            <person name="Lescat M."/>
            <person name="Mangenot S."/>
            <person name="Martinez-Jehanne V."/>
            <person name="Matic I."/>
            <person name="Nassif X."/>
            <person name="Oztas S."/>
            <person name="Petit M.A."/>
            <person name="Pichon C."/>
            <person name="Rouy Z."/>
            <person name="Ruf C.S."/>
            <person name="Schneider D."/>
            <person name="Tourret J."/>
            <person name="Vacherie B."/>
            <person name="Vallenet D."/>
            <person name="Medigue C."/>
            <person name="Rocha E.P.C."/>
            <person name="Denamur E."/>
        </authorList>
    </citation>
    <scope>NUCLEOTIDE SEQUENCE [LARGE SCALE GENOMIC DNA]</scope>
    <source>
        <strain>55989 / EAEC</strain>
    </source>
</reference>
<keyword id="KW-0963">Cytoplasm</keyword>
<keyword id="KW-0560">Oxidoreductase</keyword>
<keyword id="KW-1185">Reference proteome</keyword>
<organism>
    <name type="scientific">Escherichia coli (strain 55989 / EAEC)</name>
    <dbReference type="NCBI Taxonomy" id="585055"/>
    <lineage>
        <taxon>Bacteria</taxon>
        <taxon>Pseudomonadati</taxon>
        <taxon>Pseudomonadota</taxon>
        <taxon>Gammaproteobacteria</taxon>
        <taxon>Enterobacterales</taxon>
        <taxon>Enterobacteriaceae</taxon>
        <taxon>Escherichia</taxon>
    </lineage>
</organism>
<sequence>MSKLDLNALNELPKVDRILALAETNAELEKLDAEGRVAWALDNLPGEYVLSSSFGIQAAVSLHLVNQIHPDIPVILTDTGYLFPETYRFIDELTDKLKLNLKVYRATESAAWQEARYGKLWEQGVEGIEKYNDINKVEPMNRALKELNAQTWFAGLRREQSGSRANLPVLAIQRGVFKVLPIIDWDNRTIYQYLQKHGLKYHPLWDEGYLSVGDTHTTRKWEPGMSEEETRFFGLKRECGLHEG</sequence>
<proteinExistence type="inferred from homology"/>
<evidence type="ECO:0000255" key="1">
    <source>
        <dbReference type="HAMAP-Rule" id="MF_00063"/>
    </source>
</evidence>